<feature type="signal peptide" evidence="1">
    <location>
        <begin position="1"/>
        <end position="22"/>
    </location>
</feature>
<feature type="chain" id="PRO_0000020185" description="Skp-like protein">
    <location>
        <begin position="23"/>
        <end position="168"/>
    </location>
</feature>
<evidence type="ECO:0000255" key="1"/>
<evidence type="ECO:0000305" key="2"/>
<name>SKPL_PSEAE</name>
<dbReference type="EMBL" id="AE004091">
    <property type="protein sequence ID" value="AAG07035.1"/>
    <property type="molecule type" value="Genomic_DNA"/>
</dbReference>
<dbReference type="PIR" id="G83190">
    <property type="entry name" value="G83190"/>
</dbReference>
<dbReference type="RefSeq" id="NP_252337.1">
    <property type="nucleotide sequence ID" value="NC_002516.2"/>
</dbReference>
<dbReference type="RefSeq" id="WP_003098586.1">
    <property type="nucleotide sequence ID" value="NZ_QZGE01000001.1"/>
</dbReference>
<dbReference type="SASBDB" id="Q9HXY5"/>
<dbReference type="SMR" id="Q9HXY5"/>
<dbReference type="STRING" id="208964.PA3647"/>
<dbReference type="PaxDb" id="208964-PA3647"/>
<dbReference type="DNASU" id="880526"/>
<dbReference type="GeneID" id="880526"/>
<dbReference type="KEGG" id="pae:PA3647"/>
<dbReference type="PATRIC" id="fig|208964.12.peg.3816"/>
<dbReference type="PseudoCAP" id="PA3647"/>
<dbReference type="HOGENOM" id="CLU_101388_4_0_6"/>
<dbReference type="InParanoid" id="Q9HXY5"/>
<dbReference type="OrthoDB" id="6120044at2"/>
<dbReference type="PhylomeDB" id="Q9HXY5"/>
<dbReference type="BioCyc" id="PAER208964:G1FZ6-3717-MONOMER"/>
<dbReference type="Proteomes" id="UP000002438">
    <property type="component" value="Chromosome"/>
</dbReference>
<dbReference type="GO" id="GO:0051082">
    <property type="term" value="F:unfolded protein binding"/>
    <property type="evidence" value="ECO:0007669"/>
    <property type="project" value="InterPro"/>
</dbReference>
<dbReference type="GO" id="GO:0061077">
    <property type="term" value="P:chaperone-mediated protein folding"/>
    <property type="evidence" value="ECO:0000318"/>
    <property type="project" value="GO_Central"/>
</dbReference>
<dbReference type="GO" id="GO:0050821">
    <property type="term" value="P:protein stabilization"/>
    <property type="evidence" value="ECO:0000318"/>
    <property type="project" value="GO_Central"/>
</dbReference>
<dbReference type="FunFam" id="3.30.910.20:FF:000002">
    <property type="entry name" value="Outer membrane chaperone Skp (OmpH)"/>
    <property type="match status" value="1"/>
</dbReference>
<dbReference type="Gene3D" id="3.30.910.20">
    <property type="entry name" value="Skp domain"/>
    <property type="match status" value="1"/>
</dbReference>
<dbReference type="InterPro" id="IPR005632">
    <property type="entry name" value="Chaperone_Skp"/>
</dbReference>
<dbReference type="InterPro" id="IPR024930">
    <property type="entry name" value="Skp_dom_sf"/>
</dbReference>
<dbReference type="PANTHER" id="PTHR35089">
    <property type="entry name" value="CHAPERONE PROTEIN SKP"/>
    <property type="match status" value="1"/>
</dbReference>
<dbReference type="PANTHER" id="PTHR35089:SF1">
    <property type="entry name" value="CHAPERONE PROTEIN SKP"/>
    <property type="match status" value="1"/>
</dbReference>
<dbReference type="Pfam" id="PF03938">
    <property type="entry name" value="OmpH"/>
    <property type="match status" value="1"/>
</dbReference>
<dbReference type="SMART" id="SM00935">
    <property type="entry name" value="OmpH"/>
    <property type="match status" value="1"/>
</dbReference>
<dbReference type="SUPFAM" id="SSF111384">
    <property type="entry name" value="OmpH-like"/>
    <property type="match status" value="1"/>
</dbReference>
<proteinExistence type="inferred from homology"/>
<sequence length="168" mass="19090">MRKFTQFVLITAAIMAAPSAFAEMKIAVLNYQMALLESDAAKQYAVDAEKKFGPQLNKLKNLERDAKALQDKLVSNGSKMSQGDREKAELDFKQKARDFQFQSKELNESKAAADRDMLKKLKPKLDQAVEETIKKGGYDMVIERGAVVDVKPQYDITRQVIERMNQLR</sequence>
<comment type="similarity">
    <text evidence="2">Belongs to the Skp family.</text>
</comment>
<gene>
    <name type="ordered locus">PA3647</name>
</gene>
<organism>
    <name type="scientific">Pseudomonas aeruginosa (strain ATCC 15692 / DSM 22644 / CIP 104116 / JCM 14847 / LMG 12228 / 1C / PRS 101 / PAO1)</name>
    <dbReference type="NCBI Taxonomy" id="208964"/>
    <lineage>
        <taxon>Bacteria</taxon>
        <taxon>Pseudomonadati</taxon>
        <taxon>Pseudomonadota</taxon>
        <taxon>Gammaproteobacteria</taxon>
        <taxon>Pseudomonadales</taxon>
        <taxon>Pseudomonadaceae</taxon>
        <taxon>Pseudomonas</taxon>
    </lineage>
</organism>
<keyword id="KW-1185">Reference proteome</keyword>
<keyword id="KW-0732">Signal</keyword>
<accession>Q9HXY5</accession>
<protein>
    <recommendedName>
        <fullName>Skp-like protein</fullName>
    </recommendedName>
</protein>
<reference key="1">
    <citation type="journal article" date="2000" name="Nature">
        <title>Complete genome sequence of Pseudomonas aeruginosa PAO1, an opportunistic pathogen.</title>
        <authorList>
            <person name="Stover C.K."/>
            <person name="Pham X.-Q.T."/>
            <person name="Erwin A.L."/>
            <person name="Mizoguchi S.D."/>
            <person name="Warrener P."/>
            <person name="Hickey M.J."/>
            <person name="Brinkman F.S.L."/>
            <person name="Hufnagle W.O."/>
            <person name="Kowalik D.J."/>
            <person name="Lagrou M."/>
            <person name="Garber R.L."/>
            <person name="Goltry L."/>
            <person name="Tolentino E."/>
            <person name="Westbrock-Wadman S."/>
            <person name="Yuan Y."/>
            <person name="Brody L.L."/>
            <person name="Coulter S.N."/>
            <person name="Folger K.R."/>
            <person name="Kas A."/>
            <person name="Larbig K."/>
            <person name="Lim R.M."/>
            <person name="Smith K.A."/>
            <person name="Spencer D.H."/>
            <person name="Wong G.K.-S."/>
            <person name="Wu Z."/>
            <person name="Paulsen I.T."/>
            <person name="Reizer J."/>
            <person name="Saier M.H. Jr."/>
            <person name="Hancock R.E.W."/>
            <person name="Lory S."/>
            <person name="Olson M.V."/>
        </authorList>
    </citation>
    <scope>NUCLEOTIDE SEQUENCE [LARGE SCALE GENOMIC DNA]</scope>
    <source>
        <strain>ATCC 15692 / DSM 22644 / CIP 104116 / JCM 14847 / LMG 12228 / 1C / PRS 101 / PAO1</strain>
    </source>
</reference>